<dbReference type="EMBL" id="CP000517">
    <property type="protein sequence ID" value="ABX26560.1"/>
    <property type="molecule type" value="Genomic_DNA"/>
</dbReference>
<dbReference type="SMR" id="A8YXM9"/>
<dbReference type="KEGG" id="lhe:lhv_0336"/>
<dbReference type="eggNOG" id="COG0100">
    <property type="taxonomic scope" value="Bacteria"/>
</dbReference>
<dbReference type="HOGENOM" id="CLU_072439_5_0_9"/>
<dbReference type="Proteomes" id="UP000000790">
    <property type="component" value="Chromosome"/>
</dbReference>
<dbReference type="GO" id="GO:1990904">
    <property type="term" value="C:ribonucleoprotein complex"/>
    <property type="evidence" value="ECO:0007669"/>
    <property type="project" value="UniProtKB-KW"/>
</dbReference>
<dbReference type="GO" id="GO:0005840">
    <property type="term" value="C:ribosome"/>
    <property type="evidence" value="ECO:0007669"/>
    <property type="project" value="UniProtKB-KW"/>
</dbReference>
<dbReference type="GO" id="GO:0019843">
    <property type="term" value="F:rRNA binding"/>
    <property type="evidence" value="ECO:0007669"/>
    <property type="project" value="UniProtKB-UniRule"/>
</dbReference>
<dbReference type="GO" id="GO:0003735">
    <property type="term" value="F:structural constituent of ribosome"/>
    <property type="evidence" value="ECO:0007669"/>
    <property type="project" value="InterPro"/>
</dbReference>
<dbReference type="GO" id="GO:0006412">
    <property type="term" value="P:translation"/>
    <property type="evidence" value="ECO:0007669"/>
    <property type="project" value="UniProtKB-UniRule"/>
</dbReference>
<dbReference type="FunFam" id="3.30.420.80:FF:000001">
    <property type="entry name" value="30S ribosomal protein S11"/>
    <property type="match status" value="1"/>
</dbReference>
<dbReference type="Gene3D" id="3.30.420.80">
    <property type="entry name" value="Ribosomal protein S11"/>
    <property type="match status" value="1"/>
</dbReference>
<dbReference type="HAMAP" id="MF_01310">
    <property type="entry name" value="Ribosomal_uS11"/>
    <property type="match status" value="1"/>
</dbReference>
<dbReference type="InterPro" id="IPR001971">
    <property type="entry name" value="Ribosomal_uS11"/>
</dbReference>
<dbReference type="InterPro" id="IPR019981">
    <property type="entry name" value="Ribosomal_uS11_bac-type"/>
</dbReference>
<dbReference type="InterPro" id="IPR018102">
    <property type="entry name" value="Ribosomal_uS11_CS"/>
</dbReference>
<dbReference type="InterPro" id="IPR036967">
    <property type="entry name" value="Ribosomal_uS11_sf"/>
</dbReference>
<dbReference type="NCBIfam" id="NF003698">
    <property type="entry name" value="PRK05309.1"/>
    <property type="match status" value="1"/>
</dbReference>
<dbReference type="NCBIfam" id="TIGR03632">
    <property type="entry name" value="uS11_bact"/>
    <property type="match status" value="1"/>
</dbReference>
<dbReference type="PANTHER" id="PTHR11759">
    <property type="entry name" value="40S RIBOSOMAL PROTEIN S14/30S RIBOSOMAL PROTEIN S11"/>
    <property type="match status" value="1"/>
</dbReference>
<dbReference type="Pfam" id="PF00411">
    <property type="entry name" value="Ribosomal_S11"/>
    <property type="match status" value="1"/>
</dbReference>
<dbReference type="PIRSF" id="PIRSF002131">
    <property type="entry name" value="Ribosomal_S11"/>
    <property type="match status" value="1"/>
</dbReference>
<dbReference type="SUPFAM" id="SSF53137">
    <property type="entry name" value="Translational machinery components"/>
    <property type="match status" value="1"/>
</dbReference>
<dbReference type="PROSITE" id="PS00054">
    <property type="entry name" value="RIBOSOMAL_S11"/>
    <property type="match status" value="1"/>
</dbReference>
<protein>
    <recommendedName>
        <fullName evidence="1">Small ribosomal subunit protein uS11</fullName>
    </recommendedName>
    <alternativeName>
        <fullName evidence="2">30S ribosomal protein S11</fullName>
    </alternativeName>
</protein>
<feature type="chain" id="PRO_0000323341" description="Small ribosomal subunit protein uS11">
    <location>
        <begin position="1"/>
        <end position="130"/>
    </location>
</feature>
<gene>
    <name evidence="1" type="primary">rpsK</name>
    <name type="ordered locus">lhv_0336</name>
</gene>
<keyword id="KW-0687">Ribonucleoprotein</keyword>
<keyword id="KW-0689">Ribosomal protein</keyword>
<keyword id="KW-0694">RNA-binding</keyword>
<keyword id="KW-0699">rRNA-binding</keyword>
<comment type="function">
    <text evidence="1">Located on the platform of the 30S subunit, it bridges several disparate RNA helices of the 16S rRNA. Forms part of the Shine-Dalgarno cleft in the 70S ribosome.</text>
</comment>
<comment type="subunit">
    <text evidence="1">Part of the 30S ribosomal subunit. Interacts with proteins S7 and S18. Binds to IF-3.</text>
</comment>
<comment type="similarity">
    <text evidence="1">Belongs to the universal ribosomal protein uS11 family.</text>
</comment>
<name>RS11_LACH4</name>
<accession>A8YXM9</accession>
<organism>
    <name type="scientific">Lactobacillus helveticus (strain DPC 4571)</name>
    <dbReference type="NCBI Taxonomy" id="405566"/>
    <lineage>
        <taxon>Bacteria</taxon>
        <taxon>Bacillati</taxon>
        <taxon>Bacillota</taxon>
        <taxon>Bacilli</taxon>
        <taxon>Lactobacillales</taxon>
        <taxon>Lactobacillaceae</taxon>
        <taxon>Lactobacillus</taxon>
    </lineage>
</organism>
<proteinExistence type="inferred from homology"/>
<reference key="1">
    <citation type="journal article" date="2008" name="J. Bacteriol.">
        <title>Genome sequence of Lactobacillus helveticus: an organism distinguished by selective gene loss and IS element expansion.</title>
        <authorList>
            <person name="Callanan M."/>
            <person name="Kaleta P."/>
            <person name="O'Callaghan J."/>
            <person name="O'Sullivan O."/>
            <person name="Jordan K."/>
            <person name="McAuliffe O."/>
            <person name="Sangrador-Vegas A."/>
            <person name="Slattery L."/>
            <person name="Fitzgerald G.F."/>
            <person name="Beresford T."/>
            <person name="Ross R.P."/>
        </authorList>
    </citation>
    <scope>NUCLEOTIDE SEQUENCE [LARGE SCALE GENOMIC DNA]</scope>
    <source>
        <strain>DPC 4571</strain>
    </source>
</reference>
<evidence type="ECO:0000255" key="1">
    <source>
        <dbReference type="HAMAP-Rule" id="MF_01310"/>
    </source>
</evidence>
<evidence type="ECO:0000305" key="2"/>
<sequence length="130" mass="13839">MMPAKKTARKRRVKKHVESGVAHIHSTFNNTLVMITDVQGNAVAWSSAGALGFKGSRKSTPFAAQMAAEAAAKSAMDQGMKHVEVSVKGPGAGRESAIRSLQATGLEITAIRDVTPVPHNGSRPPKRRRV</sequence>